<proteinExistence type="evidence at protein level"/>
<sequence length="363" mass="40769">MARSLTILAIVFAVATARVTKSESPKEILAQVNKDSFGNSILSVLQLQLATGGPVGEIQILLNNIASQLNGDQKKADKVHESDTVAFEKIIADLEQEIAYHQTQIVALSNLRDSTTEALGEAEVEVRVVTSDIANNEKSFADESATRQSQHDTWVRKDAEHVDQMEAIDEASKIVQHLQAGVAFAQLKSRFEKVQAKLMESKHALFKPLINALTQLASKVDNKSIIKILELLAQIRQQLVASRASLLATEERQAANWEVQSSHLQEEHKRLVERKAFLENSIVQFKVTIQEAVEDLEDQTLFLEDAEDSLAIQERWAAEQESQYEAQTFEREQQLEVVERLQEVLTQKLSAASEFLQVREEVF</sequence>
<feature type="signal peptide" evidence="1">
    <location>
        <begin position="1"/>
        <end position="17"/>
    </location>
</feature>
<feature type="propeptide" id="PRO_0000034385">
    <location>
        <begin position="18"/>
        <end position="52"/>
    </location>
</feature>
<feature type="chain" id="PRO_0000034386" description="Trichocyst matrix protein T4-A 1">
    <location>
        <begin position="53"/>
        <end position="189"/>
    </location>
</feature>
<feature type="propeptide" id="PRO_0000034387">
    <location>
        <begin position="190"/>
        <end position="221"/>
    </location>
</feature>
<feature type="chain" id="PRO_0000034388" description="Trichocyst matrix protein T4-A 2">
    <location>
        <begin position="222"/>
        <end position="363"/>
    </location>
</feature>
<feature type="coiled-coil region" evidence="1">
    <location>
        <begin position="85"/>
        <end position="119"/>
    </location>
</feature>
<feature type="coiled-coil region" evidence="1">
    <location>
        <begin position="244"/>
        <end position="352"/>
    </location>
</feature>
<feature type="sequence conflict" description="In Ref. 1; AAC47029." evidence="2" ref="1">
    <original>VH</original>
    <variation>LD</variation>
    <location>
        <begin position="79"/>
        <end position="80"/>
    </location>
</feature>
<feature type="sequence conflict" description="In Ref. 1; AAC47029." evidence="2" ref="1">
    <original>E</original>
    <variation>Q</variation>
    <location>
        <position position="343"/>
    </location>
</feature>
<dbReference type="EMBL" id="U47117">
    <property type="protein sequence ID" value="AAC47029.1"/>
    <property type="molecule type" value="Genomic_DNA"/>
</dbReference>
<dbReference type="EMBL" id="CT867986">
    <property type="protein sequence ID" value="CAK56161.1"/>
    <property type="molecule type" value="Genomic_DNA"/>
</dbReference>
<dbReference type="RefSeq" id="XP_001423559.1">
    <property type="nucleotide sequence ID" value="XM_001423522.1"/>
</dbReference>
<dbReference type="SMR" id="Q27182"/>
<dbReference type="EnsemblProtists" id="CAK56161">
    <property type="protein sequence ID" value="CAK56161"/>
    <property type="gene ID" value="GSPATT00004255001"/>
</dbReference>
<dbReference type="GeneID" id="5009343"/>
<dbReference type="KEGG" id="ptm:GSPATT00004255001"/>
<dbReference type="eggNOG" id="ENOG502SR74">
    <property type="taxonomic scope" value="Eukaryota"/>
</dbReference>
<dbReference type="HOGENOM" id="CLU_065704_0_0_1"/>
<dbReference type="InParanoid" id="Q27182"/>
<dbReference type="OrthoDB" id="298080at2759"/>
<dbReference type="Proteomes" id="UP000000600">
    <property type="component" value="Partially assembled WGS sequence"/>
</dbReference>
<dbReference type="GO" id="GO:0055039">
    <property type="term" value="C:trichocyst"/>
    <property type="evidence" value="ECO:0007669"/>
    <property type="project" value="UniProtKB-SubCell"/>
</dbReference>
<gene>
    <name type="primary">T4A</name>
    <name type="ORF">GSPATT00004255001</name>
</gene>
<name>T4A_PARTE</name>
<evidence type="ECO:0000255" key="1"/>
<evidence type="ECO:0000305" key="2"/>
<comment type="function">
    <text>Structural protein that crystallize inside the trichocyst matrix.</text>
</comment>
<comment type="subcellular location">
    <subcellularLocation>
        <location>Trichocyst</location>
    </subcellularLocation>
    <text>These are architecturally complex secretory storage granules-docked at the plasma membrane, ready to rapidly respond to an exocytotic stimulus.</text>
</comment>
<comment type="PTM">
    <text>Two components are produced by post-translational processing from the precursor peptide.</text>
</comment>
<comment type="similarity">
    <text evidence="2">Belongs to the TMP family.</text>
</comment>
<comment type="online information" name="Protein Spotlight">
    <link uri="https://www.proteinspotlight.org/back_issues/003"/>
    <text>The arsenal of Paramecium - Issue 3 of October 2000</text>
</comment>
<organism>
    <name type="scientific">Paramecium tetraurelia</name>
    <dbReference type="NCBI Taxonomy" id="5888"/>
    <lineage>
        <taxon>Eukaryota</taxon>
        <taxon>Sar</taxon>
        <taxon>Alveolata</taxon>
        <taxon>Ciliophora</taxon>
        <taxon>Intramacronucleata</taxon>
        <taxon>Oligohymenophorea</taxon>
        <taxon>Peniculida</taxon>
        <taxon>Parameciidae</taxon>
        <taxon>Paramecium</taxon>
    </lineage>
</organism>
<keyword id="KW-0175">Coiled coil</keyword>
<keyword id="KW-0903">Direct protein sequencing</keyword>
<keyword id="KW-1185">Reference proteome</keyword>
<keyword id="KW-0732">Signal</keyword>
<reference key="1">
    <citation type="journal article" date="1996" name="J. Biol. Chem.">
        <title>Cloning and sequence analysis of genes coding for paramecium secretory granule (trichocyst) proteins. A unique protein fold for a family of polypeptides with different primary structures.</title>
        <authorList>
            <person name="Gautier M.-C."/>
            <person name="Sperling L."/>
            <person name="Madeddu L."/>
        </authorList>
    </citation>
    <scope>NUCLEOTIDE SEQUENCE [GENOMIC DNA]</scope>
    <source>
        <strain>Stock d4-2</strain>
    </source>
</reference>
<reference key="2">
    <citation type="journal article" date="2006" name="Nature">
        <title>Global trends of whole-genome duplications revealed by the ciliate Paramecium tetraurelia.</title>
        <authorList>
            <person name="Aury J.-M."/>
            <person name="Jaillon O."/>
            <person name="Duret L."/>
            <person name="Noel B."/>
            <person name="Jubin C."/>
            <person name="Porcel B.M."/>
            <person name="Segurens B."/>
            <person name="Daubin V."/>
            <person name="Anthouard V."/>
            <person name="Aiach N."/>
            <person name="Arnaiz O."/>
            <person name="Billaut A."/>
            <person name="Beisson J."/>
            <person name="Blanc I."/>
            <person name="Bouhouche K."/>
            <person name="Camara F."/>
            <person name="Duharcourt S."/>
            <person name="Guigo R."/>
            <person name="Gogendeau D."/>
            <person name="Katinka M."/>
            <person name="Keller A.-M."/>
            <person name="Kissmehl R."/>
            <person name="Klotz C."/>
            <person name="Koll F."/>
            <person name="Le Mouel A."/>
            <person name="Lepere G."/>
            <person name="Malinsky S."/>
            <person name="Nowacki M."/>
            <person name="Nowak J.K."/>
            <person name="Plattner H."/>
            <person name="Poulain J."/>
            <person name="Ruiz F."/>
            <person name="Serrano V."/>
            <person name="Zagulski M."/>
            <person name="Dessen P."/>
            <person name="Betermier M."/>
            <person name="Weissenbach J."/>
            <person name="Scarpelli C."/>
            <person name="Schaechter V."/>
            <person name="Sperling L."/>
            <person name="Meyer E."/>
            <person name="Cohen J."/>
            <person name="Wincker P."/>
        </authorList>
    </citation>
    <scope>NUCLEOTIDE SEQUENCE [LARGE SCALE GENOMIC DNA]</scope>
    <source>
        <strain>Stock d4-2</strain>
    </source>
</reference>
<reference key="3">
    <citation type="journal article" date="1995" name="Mol. Biol. Cell">
        <title>A large multigene family codes for the polypeptides of the crystalline trichocyst matrix in Paramecium.</title>
        <authorList>
            <person name="Madeddu L."/>
            <person name="Gautier M.-C."/>
            <person name="Vayssie L."/>
            <person name="Houari A."/>
            <person name="Sperling L."/>
        </authorList>
    </citation>
    <scope>NUCLEOTIDE SEQUENCE [GENOMIC DNA] OF 53-79</scope>
    <source>
        <strain>Stock d4-2</strain>
    </source>
</reference>
<reference key="4">
    <citation type="journal article" date="1994" name="Biochimie">
        <title>Protein processing and morphogenesis of secretory granules in Paramecium.</title>
        <authorList>
            <person name="Madeddu L."/>
            <person name="Gautier M.-C."/>
            <person name="le Caer J.-P."/>
            <person name="de Loubresse N."/>
            <person name="Sperling L."/>
        </authorList>
    </citation>
    <scope>PARTIAL PROTEIN SEQUENCE</scope>
    <source>
        <strain>Stock d4-2</strain>
    </source>
</reference>
<protein>
    <recommendedName>
        <fullName>Trichocyst matrix protein T4-A</fullName>
    </recommendedName>
    <alternativeName>
        <fullName>Secretory granule protein T4-A</fullName>
    </alternativeName>
    <alternativeName>
        <fullName>TMP 4-A</fullName>
    </alternativeName>
    <component>
        <recommendedName>
            <fullName>Trichocyst matrix protein T4-A 1</fullName>
        </recommendedName>
    </component>
    <component>
        <recommendedName>
            <fullName>Trichocyst matrix protein T4-A 2</fullName>
        </recommendedName>
    </component>
</protein>
<accession>Q27182</accession>
<accession>A0BC94</accession>